<proteinExistence type="evidence at protein level"/>
<gene>
    <name evidence="1" type="primary">ndhA</name>
</gene>
<sequence>MIIDTTTTKVQAINSFSRLEFLKEVYETIWMLFPILILVLGITIGVLVIVWLEREISASIQQRIGPEYAGPLGILQALADGTKLLFKENLLPSRGDTYLFSIGPSIAVISILLGYLIIPFGSRLVLADLSIGVFLWIAVSSIAPIGLLMSGYGSNNKYSFLGGLRAAAQSISYEIPLTLCVLSISLLSNSSSTVDIVEAQSKYGFWGWNLWRQPIGFIVFIISSLAECERLPFDLPEAEEELVAGYQTEYSGIKFGLFYVASYLNLLISSLFVTVLYLGGWNLSIPYIFISEFFEINKIDGVFGTTIGIFITLAKTFLFLFIPITTRWTLPRLRMDQLLNLGWKFLLPISLGNLLLTTSSQLFSL</sequence>
<keyword id="KW-0002">3D-structure</keyword>
<keyword id="KW-0150">Chloroplast</keyword>
<keyword id="KW-0472">Membrane</keyword>
<keyword id="KW-0520">NAD</keyword>
<keyword id="KW-0521">NADP</keyword>
<keyword id="KW-0934">Plastid</keyword>
<keyword id="KW-0618">Plastoquinone</keyword>
<keyword id="KW-0874">Quinone</keyword>
<keyword id="KW-1185">Reference proteome</keyword>
<keyword id="KW-0793">Thylakoid</keyword>
<keyword id="KW-1278">Translocase</keyword>
<keyword id="KW-0812">Transmembrane</keyword>
<keyword id="KW-1133">Transmembrane helix</keyword>
<dbReference type="EC" id="7.1.1.-" evidence="1"/>
<dbReference type="EMBL" id="AJ400848">
    <property type="protein sequence ID" value="CAB88789.1"/>
    <property type="molecule type" value="Genomic_DNA"/>
</dbReference>
<dbReference type="RefSeq" id="NP_054993.1">
    <property type="nucleotide sequence ID" value="NC_002202.1"/>
</dbReference>
<dbReference type="PDB" id="9GRX">
    <property type="method" value="EM"/>
    <property type="resolution" value="3.19 A"/>
    <property type="chains" value="A=16-365"/>
</dbReference>
<dbReference type="PDBsum" id="9GRX"/>
<dbReference type="EMDB" id="EMD-51527"/>
<dbReference type="SMR" id="Q9M3I6"/>
<dbReference type="FunCoup" id="Q9M3I6">
    <property type="interactions" value="28"/>
</dbReference>
<dbReference type="STRING" id="3562.Q9M3I6"/>
<dbReference type="GeneID" id="2715584"/>
<dbReference type="KEGG" id="soe:2715584"/>
<dbReference type="InParanoid" id="Q9M3I6"/>
<dbReference type="OrthoDB" id="531329at2759"/>
<dbReference type="Proteomes" id="UP001155700">
    <property type="component" value="Chloroplast Pltd"/>
</dbReference>
<dbReference type="GO" id="GO:0009535">
    <property type="term" value="C:chloroplast thylakoid membrane"/>
    <property type="evidence" value="ECO:0007669"/>
    <property type="project" value="UniProtKB-SubCell"/>
</dbReference>
<dbReference type="GO" id="GO:0003954">
    <property type="term" value="F:NADH dehydrogenase activity"/>
    <property type="evidence" value="ECO:0007669"/>
    <property type="project" value="TreeGrafter"/>
</dbReference>
<dbReference type="GO" id="GO:0016655">
    <property type="term" value="F:oxidoreductase activity, acting on NAD(P)H, quinone or similar compound as acceptor"/>
    <property type="evidence" value="ECO:0007669"/>
    <property type="project" value="UniProtKB-UniRule"/>
</dbReference>
<dbReference type="GO" id="GO:0048038">
    <property type="term" value="F:quinone binding"/>
    <property type="evidence" value="ECO:0007669"/>
    <property type="project" value="UniProtKB-KW"/>
</dbReference>
<dbReference type="GO" id="GO:0009060">
    <property type="term" value="P:aerobic respiration"/>
    <property type="evidence" value="ECO:0000318"/>
    <property type="project" value="GO_Central"/>
</dbReference>
<dbReference type="GO" id="GO:0019684">
    <property type="term" value="P:photosynthesis, light reaction"/>
    <property type="evidence" value="ECO:0007669"/>
    <property type="project" value="UniProtKB-UniRule"/>
</dbReference>
<dbReference type="HAMAP" id="MF_01350">
    <property type="entry name" value="NDH1_NuoH"/>
    <property type="match status" value="1"/>
</dbReference>
<dbReference type="InterPro" id="IPR001694">
    <property type="entry name" value="NADH_UbQ_OxRdtase_su1/FPO"/>
</dbReference>
<dbReference type="InterPro" id="IPR018086">
    <property type="entry name" value="NADH_UbQ_OxRdtase_su1_CS"/>
</dbReference>
<dbReference type="NCBIfam" id="NF004741">
    <property type="entry name" value="PRK06076.1-2"/>
    <property type="match status" value="1"/>
</dbReference>
<dbReference type="PANTHER" id="PTHR11432">
    <property type="entry name" value="NADH DEHYDROGENASE SUBUNIT 1"/>
    <property type="match status" value="1"/>
</dbReference>
<dbReference type="PANTHER" id="PTHR11432:SF3">
    <property type="entry name" value="NADH-UBIQUINONE OXIDOREDUCTASE CHAIN 1"/>
    <property type="match status" value="1"/>
</dbReference>
<dbReference type="Pfam" id="PF00146">
    <property type="entry name" value="NADHdh"/>
    <property type="match status" value="1"/>
</dbReference>
<dbReference type="PROSITE" id="PS00667">
    <property type="entry name" value="COMPLEX1_ND1_1"/>
    <property type="match status" value="1"/>
</dbReference>
<dbReference type="PROSITE" id="PS00668">
    <property type="entry name" value="COMPLEX1_ND1_2"/>
    <property type="match status" value="1"/>
</dbReference>
<reference key="1">
    <citation type="journal article" date="2001" name="Plant Mol. Biol.">
        <title>The plastid chromosome of spinach (Spinacia oleracea): complete nucleotide sequence and gene organization.</title>
        <authorList>
            <person name="Schmitz-Linneweber C."/>
            <person name="Maier R.M."/>
            <person name="Alcaraz J.-P."/>
            <person name="Cottet A."/>
            <person name="Herrmann R.G."/>
            <person name="Mache R."/>
        </authorList>
    </citation>
    <scope>NUCLEOTIDE SEQUENCE [LARGE SCALE GENOMIC DNA]</scope>
    <source>
        <strain>cv. Geant d'hiver</strain>
        <strain>cv. Monatol</strain>
    </source>
</reference>
<feature type="chain" id="PRO_0000117515" description="NAD(P)H-quinone oxidoreductase subunit 1, chloroplastic">
    <location>
        <begin position="1"/>
        <end position="365"/>
    </location>
</feature>
<feature type="transmembrane region" description="Helical" evidence="1">
    <location>
        <begin position="32"/>
        <end position="52"/>
    </location>
</feature>
<feature type="transmembrane region" description="Helical" evidence="1">
    <location>
        <begin position="98"/>
        <end position="118"/>
    </location>
</feature>
<feature type="transmembrane region" description="Helical" evidence="1">
    <location>
        <begin position="129"/>
        <end position="149"/>
    </location>
</feature>
<feature type="transmembrane region" description="Helical" evidence="1">
    <location>
        <begin position="257"/>
        <end position="279"/>
    </location>
</feature>
<feature type="transmembrane region" description="Helical" evidence="1">
    <location>
        <begin position="302"/>
        <end position="322"/>
    </location>
</feature>
<feature type="transmembrane region" description="Helical" evidence="1">
    <location>
        <begin position="338"/>
        <end position="358"/>
    </location>
</feature>
<evidence type="ECO:0000255" key="1">
    <source>
        <dbReference type="HAMAP-Rule" id="MF_01350"/>
    </source>
</evidence>
<organism>
    <name type="scientific">Spinacia oleracea</name>
    <name type="common">Spinach</name>
    <dbReference type="NCBI Taxonomy" id="3562"/>
    <lineage>
        <taxon>Eukaryota</taxon>
        <taxon>Viridiplantae</taxon>
        <taxon>Streptophyta</taxon>
        <taxon>Embryophyta</taxon>
        <taxon>Tracheophyta</taxon>
        <taxon>Spermatophyta</taxon>
        <taxon>Magnoliopsida</taxon>
        <taxon>eudicotyledons</taxon>
        <taxon>Gunneridae</taxon>
        <taxon>Pentapetalae</taxon>
        <taxon>Caryophyllales</taxon>
        <taxon>Chenopodiaceae</taxon>
        <taxon>Chenopodioideae</taxon>
        <taxon>Anserineae</taxon>
        <taxon>Spinacia</taxon>
    </lineage>
</organism>
<comment type="function">
    <text evidence="1">NDH shuttles electrons from NAD(P)H:plastoquinone, via FMN and iron-sulfur (Fe-S) centers, to quinones in the photosynthetic chain and possibly in a chloroplast respiratory chain. The immediate electron acceptor for the enzyme in this species is believed to be plastoquinone. Couples the redox reaction to proton translocation, and thus conserves the redox energy in a proton gradient.</text>
</comment>
<comment type="catalytic activity">
    <reaction evidence="1">
        <text>a plastoquinone + NADH + (n+1) H(+)(in) = a plastoquinol + NAD(+) + n H(+)(out)</text>
        <dbReference type="Rhea" id="RHEA:42608"/>
        <dbReference type="Rhea" id="RHEA-COMP:9561"/>
        <dbReference type="Rhea" id="RHEA-COMP:9562"/>
        <dbReference type="ChEBI" id="CHEBI:15378"/>
        <dbReference type="ChEBI" id="CHEBI:17757"/>
        <dbReference type="ChEBI" id="CHEBI:57540"/>
        <dbReference type="ChEBI" id="CHEBI:57945"/>
        <dbReference type="ChEBI" id="CHEBI:62192"/>
    </reaction>
</comment>
<comment type="catalytic activity">
    <reaction evidence="1">
        <text>a plastoquinone + NADPH + (n+1) H(+)(in) = a plastoquinol + NADP(+) + n H(+)(out)</text>
        <dbReference type="Rhea" id="RHEA:42612"/>
        <dbReference type="Rhea" id="RHEA-COMP:9561"/>
        <dbReference type="Rhea" id="RHEA-COMP:9562"/>
        <dbReference type="ChEBI" id="CHEBI:15378"/>
        <dbReference type="ChEBI" id="CHEBI:17757"/>
        <dbReference type="ChEBI" id="CHEBI:57783"/>
        <dbReference type="ChEBI" id="CHEBI:58349"/>
        <dbReference type="ChEBI" id="CHEBI:62192"/>
    </reaction>
</comment>
<comment type="subunit">
    <text evidence="1">NDH is composed of at least 16 different subunits, 5 of which are encoded in the nucleus.</text>
</comment>
<comment type="subcellular location">
    <subcellularLocation>
        <location evidence="1">Plastid</location>
        <location evidence="1">Chloroplast thylakoid membrane</location>
        <topology evidence="1">Multi-pass membrane protein</topology>
    </subcellularLocation>
</comment>
<comment type="similarity">
    <text evidence="1">Belongs to the complex I subunit 1 family.</text>
</comment>
<name>NU1C_SPIOL</name>
<protein>
    <recommendedName>
        <fullName evidence="1">NAD(P)H-quinone oxidoreductase subunit 1, chloroplastic</fullName>
        <ecNumber evidence="1">7.1.1.-</ecNumber>
    </recommendedName>
    <alternativeName>
        <fullName evidence="1">NAD(P)H dehydrogenase subunit 1</fullName>
        <shortName evidence="1">NDH subunit 1</shortName>
    </alternativeName>
    <alternativeName>
        <fullName evidence="1">NADH-plastoquinone oxidoreductase subunit 1</fullName>
    </alternativeName>
</protein>
<accession>Q9M3I6</accession>
<geneLocation type="chloroplast"/>